<keyword id="KW-0106">Calcium</keyword>
<keyword id="KW-1015">Disulfide bond</keyword>
<keyword id="KW-0378">Hydrolase</keyword>
<keyword id="KW-0442">Lipid degradation</keyword>
<keyword id="KW-0443">Lipid metabolism</keyword>
<keyword id="KW-0479">Metal-binding</keyword>
<keyword id="KW-0528">Neurotoxin</keyword>
<keyword id="KW-0638">Presynaptic neurotoxin</keyword>
<keyword id="KW-0964">Secreted</keyword>
<keyword id="KW-0732">Signal</keyword>
<keyword id="KW-0800">Toxin</keyword>
<comment type="function">
    <text evidence="1">Snake venom phospholipase A2 (PLA2) that inhibits neuromuscular transmission by blocking acetylcholine release from the nerve termini. PLA2 catalyzes the calcium-dependent hydrolysis of the 2-acyl groups in 3-sn-phosphoglycerides (By similarity).</text>
</comment>
<comment type="catalytic activity">
    <reaction evidence="3 4">
        <text>a 1,2-diacyl-sn-glycero-3-phosphocholine + H2O = a 1-acyl-sn-glycero-3-phosphocholine + a fatty acid + H(+)</text>
        <dbReference type="Rhea" id="RHEA:15801"/>
        <dbReference type="ChEBI" id="CHEBI:15377"/>
        <dbReference type="ChEBI" id="CHEBI:15378"/>
        <dbReference type="ChEBI" id="CHEBI:28868"/>
        <dbReference type="ChEBI" id="CHEBI:57643"/>
        <dbReference type="ChEBI" id="CHEBI:58168"/>
        <dbReference type="EC" id="3.1.1.4"/>
    </reaction>
</comment>
<comment type="cofactor">
    <cofactor evidence="1">
        <name>Ca(2+)</name>
        <dbReference type="ChEBI" id="CHEBI:29108"/>
    </cofactor>
    <text evidence="1">Binds 1 Ca(2+) ion.</text>
</comment>
<comment type="subcellular location">
    <subcellularLocation>
        <location evidence="1">Secreted</location>
    </subcellularLocation>
</comment>
<comment type="tissue specificity">
    <text>Expressed by the venom gland.</text>
</comment>
<comment type="similarity">
    <text evidence="5">Belongs to the phospholipase A2 family. Group I subfamily. D49 sub-subfamily.</text>
</comment>
<dbReference type="EC" id="3.1.1.4"/>
<dbReference type="EMBL" id="AB062447">
    <property type="protein sequence ID" value="BAB72254.1"/>
    <property type="molecule type" value="Genomic_DNA"/>
</dbReference>
<dbReference type="SMR" id="Q8UUH8"/>
<dbReference type="GO" id="GO:0005576">
    <property type="term" value="C:extracellular region"/>
    <property type="evidence" value="ECO:0007669"/>
    <property type="project" value="UniProtKB-SubCell"/>
</dbReference>
<dbReference type="GO" id="GO:0005509">
    <property type="term" value="F:calcium ion binding"/>
    <property type="evidence" value="ECO:0007669"/>
    <property type="project" value="InterPro"/>
</dbReference>
<dbReference type="GO" id="GO:0047498">
    <property type="term" value="F:calcium-dependent phospholipase A2 activity"/>
    <property type="evidence" value="ECO:0007669"/>
    <property type="project" value="TreeGrafter"/>
</dbReference>
<dbReference type="GO" id="GO:0005543">
    <property type="term" value="F:phospholipid binding"/>
    <property type="evidence" value="ECO:0007669"/>
    <property type="project" value="TreeGrafter"/>
</dbReference>
<dbReference type="GO" id="GO:0090729">
    <property type="term" value="F:toxin activity"/>
    <property type="evidence" value="ECO:0007669"/>
    <property type="project" value="UniProtKB-KW"/>
</dbReference>
<dbReference type="GO" id="GO:0050482">
    <property type="term" value="P:arachidonate secretion"/>
    <property type="evidence" value="ECO:0007669"/>
    <property type="project" value="InterPro"/>
</dbReference>
<dbReference type="GO" id="GO:0016042">
    <property type="term" value="P:lipid catabolic process"/>
    <property type="evidence" value="ECO:0007669"/>
    <property type="project" value="UniProtKB-KW"/>
</dbReference>
<dbReference type="GO" id="GO:0006644">
    <property type="term" value="P:phospholipid metabolic process"/>
    <property type="evidence" value="ECO:0007669"/>
    <property type="project" value="InterPro"/>
</dbReference>
<dbReference type="CDD" id="cd00125">
    <property type="entry name" value="PLA2c"/>
    <property type="match status" value="1"/>
</dbReference>
<dbReference type="FunFam" id="1.20.90.10:FF:000007">
    <property type="entry name" value="Acidic phospholipase A2"/>
    <property type="match status" value="1"/>
</dbReference>
<dbReference type="Gene3D" id="1.20.90.10">
    <property type="entry name" value="Phospholipase A2 domain"/>
    <property type="match status" value="1"/>
</dbReference>
<dbReference type="InterPro" id="IPR001211">
    <property type="entry name" value="PLipase_A2"/>
</dbReference>
<dbReference type="InterPro" id="IPR033112">
    <property type="entry name" value="PLipase_A2_Asp_AS"/>
</dbReference>
<dbReference type="InterPro" id="IPR016090">
    <property type="entry name" value="PLipase_A2_dom"/>
</dbReference>
<dbReference type="InterPro" id="IPR036444">
    <property type="entry name" value="PLipase_A2_dom_sf"/>
</dbReference>
<dbReference type="InterPro" id="IPR033113">
    <property type="entry name" value="PLipase_A2_His_AS"/>
</dbReference>
<dbReference type="PANTHER" id="PTHR11716:SF106">
    <property type="entry name" value="PHOSPHOLIPASE A2 A2-ACTITOXIN-UCS2A-LIKE"/>
    <property type="match status" value="1"/>
</dbReference>
<dbReference type="PANTHER" id="PTHR11716">
    <property type="entry name" value="PHOSPHOLIPASE A2 FAMILY MEMBER"/>
    <property type="match status" value="1"/>
</dbReference>
<dbReference type="Pfam" id="PF00068">
    <property type="entry name" value="Phospholip_A2_1"/>
    <property type="match status" value="1"/>
</dbReference>
<dbReference type="PRINTS" id="PR00389">
    <property type="entry name" value="PHPHLIPASEA2"/>
</dbReference>
<dbReference type="SMART" id="SM00085">
    <property type="entry name" value="PA2c"/>
    <property type="match status" value="1"/>
</dbReference>
<dbReference type="SUPFAM" id="SSF48619">
    <property type="entry name" value="Phospholipase A2, PLA2"/>
    <property type="match status" value="1"/>
</dbReference>
<dbReference type="PROSITE" id="PS00119">
    <property type="entry name" value="PA2_ASP"/>
    <property type="match status" value="1"/>
</dbReference>
<dbReference type="PROSITE" id="PS00118">
    <property type="entry name" value="PA2_HIS"/>
    <property type="match status" value="1"/>
</dbReference>
<evidence type="ECO:0000250" key="1"/>
<evidence type="ECO:0000255" key="2"/>
<evidence type="ECO:0000255" key="3">
    <source>
        <dbReference type="PROSITE-ProRule" id="PRU10035"/>
    </source>
</evidence>
<evidence type="ECO:0000255" key="4">
    <source>
        <dbReference type="PROSITE-ProRule" id="PRU10036"/>
    </source>
</evidence>
<evidence type="ECO:0000305" key="5"/>
<accession>Q8UUH8</accession>
<reference key="1">
    <citation type="journal article" date="2002" name="Toxicon">
        <title>A comparative analysis of invaded sequences from group IA phospholipase A(2) genes provides evidence about the divergence period of genes groups and snake families.</title>
        <authorList>
            <person name="Fujimi T.J."/>
            <person name="Tsuchiya T."/>
            <person name="Tamiya T."/>
        </authorList>
    </citation>
    <scope>NUCLEOTIDE SEQUENCE [GENOMIC DNA]</scope>
    <source>
        <tissue>Liver</tissue>
    </source>
</reference>
<organism>
    <name type="scientific">Laticauda colubrina</name>
    <name type="common">Yellow-lipped sea krait</name>
    <name type="synonym">Banded sea krait</name>
    <dbReference type="NCBI Taxonomy" id="8628"/>
    <lineage>
        <taxon>Eukaryota</taxon>
        <taxon>Metazoa</taxon>
        <taxon>Chordata</taxon>
        <taxon>Craniata</taxon>
        <taxon>Vertebrata</taxon>
        <taxon>Euteleostomi</taxon>
        <taxon>Lepidosauria</taxon>
        <taxon>Squamata</taxon>
        <taxon>Bifurcata</taxon>
        <taxon>Unidentata</taxon>
        <taxon>Episquamata</taxon>
        <taxon>Toxicofera</taxon>
        <taxon>Serpentes</taxon>
        <taxon>Colubroidea</taxon>
        <taxon>Elapidae</taxon>
        <taxon>Laticaudinae</taxon>
        <taxon>Laticauda</taxon>
    </lineage>
</organism>
<sequence>MYPAHLLVLLAVCVSLLGASAISNQPRNLVQFSELIQCVNKGKRATYHYMDYGCYCGKGGSGTPVDALDRCCKTHDDCYGQAEKKGCFPFLTLYNFGCFPGGPTCGKGNTCQRFVCDCDLKAALCFAKSPYNNNNYNIDTKKRCK</sequence>
<name>PA2BH_LATCO</name>
<feature type="signal peptide" evidence="2">
    <location>
        <begin position="1"/>
        <end position="21"/>
    </location>
</feature>
<feature type="propeptide" id="PRO_0000022882" evidence="1">
    <location>
        <begin position="22"/>
        <end position="27"/>
    </location>
</feature>
<feature type="chain" id="PRO_0000022883" description="Basic phospholipase A2 PC17">
    <location>
        <begin position="28"/>
        <end position="145"/>
    </location>
</feature>
<feature type="active site" evidence="1">
    <location>
        <position position="75"/>
    </location>
</feature>
<feature type="active site" evidence="1">
    <location>
        <position position="119"/>
    </location>
</feature>
<feature type="binding site" evidence="1">
    <location>
        <position position="55"/>
    </location>
    <ligand>
        <name>Ca(2+)</name>
        <dbReference type="ChEBI" id="CHEBI:29108"/>
    </ligand>
</feature>
<feature type="binding site" evidence="1">
    <location>
        <position position="57"/>
    </location>
    <ligand>
        <name>Ca(2+)</name>
        <dbReference type="ChEBI" id="CHEBI:29108"/>
    </ligand>
</feature>
<feature type="binding site" evidence="1">
    <location>
        <position position="59"/>
    </location>
    <ligand>
        <name>Ca(2+)</name>
        <dbReference type="ChEBI" id="CHEBI:29108"/>
    </ligand>
</feature>
<feature type="binding site" evidence="1">
    <location>
        <position position="76"/>
    </location>
    <ligand>
        <name>Ca(2+)</name>
        <dbReference type="ChEBI" id="CHEBI:29108"/>
    </ligand>
</feature>
<feature type="disulfide bond" evidence="1">
    <location>
        <begin position="38"/>
        <end position="98"/>
    </location>
</feature>
<feature type="disulfide bond" evidence="1">
    <location>
        <begin position="54"/>
        <end position="144"/>
    </location>
</feature>
<feature type="disulfide bond" evidence="1">
    <location>
        <begin position="56"/>
        <end position="72"/>
    </location>
</feature>
<feature type="disulfide bond" evidence="1">
    <location>
        <begin position="71"/>
        <end position="125"/>
    </location>
</feature>
<feature type="disulfide bond" evidence="1">
    <location>
        <begin position="78"/>
        <end position="118"/>
    </location>
</feature>
<feature type="disulfide bond" evidence="1">
    <location>
        <begin position="87"/>
        <end position="111"/>
    </location>
</feature>
<feature type="disulfide bond" evidence="1">
    <location>
        <begin position="105"/>
        <end position="116"/>
    </location>
</feature>
<proteinExistence type="inferred from homology"/>
<protein>
    <recommendedName>
        <fullName>Basic phospholipase A2 PC17</fullName>
        <shortName>svPLA2</shortName>
        <ecNumber>3.1.1.4</ecNumber>
    </recommendedName>
    <alternativeName>
        <fullName>Phosphatidylcholine 2-acylhydrolase</fullName>
    </alternativeName>
</protein>